<dbReference type="EC" id="1.5.1.5" evidence="1"/>
<dbReference type="EC" id="3.5.4.9" evidence="1"/>
<dbReference type="EMBL" id="CP000301">
    <property type="protein sequence ID" value="ABD85638.1"/>
    <property type="molecule type" value="Genomic_DNA"/>
</dbReference>
<dbReference type="SMR" id="Q21D98"/>
<dbReference type="STRING" id="316056.RPC_0059"/>
<dbReference type="KEGG" id="rpc:RPC_0059"/>
<dbReference type="eggNOG" id="COG0190">
    <property type="taxonomic scope" value="Bacteria"/>
</dbReference>
<dbReference type="HOGENOM" id="CLU_034045_2_1_5"/>
<dbReference type="OrthoDB" id="9803580at2"/>
<dbReference type="UniPathway" id="UPA00193"/>
<dbReference type="GO" id="GO:0005829">
    <property type="term" value="C:cytosol"/>
    <property type="evidence" value="ECO:0007669"/>
    <property type="project" value="TreeGrafter"/>
</dbReference>
<dbReference type="GO" id="GO:0004477">
    <property type="term" value="F:methenyltetrahydrofolate cyclohydrolase activity"/>
    <property type="evidence" value="ECO:0007669"/>
    <property type="project" value="UniProtKB-UniRule"/>
</dbReference>
<dbReference type="GO" id="GO:0004488">
    <property type="term" value="F:methylenetetrahydrofolate dehydrogenase (NADP+) activity"/>
    <property type="evidence" value="ECO:0007669"/>
    <property type="project" value="UniProtKB-UniRule"/>
</dbReference>
<dbReference type="GO" id="GO:0000105">
    <property type="term" value="P:L-histidine biosynthetic process"/>
    <property type="evidence" value="ECO:0007669"/>
    <property type="project" value="UniProtKB-KW"/>
</dbReference>
<dbReference type="GO" id="GO:0009086">
    <property type="term" value="P:methionine biosynthetic process"/>
    <property type="evidence" value="ECO:0007669"/>
    <property type="project" value="UniProtKB-KW"/>
</dbReference>
<dbReference type="GO" id="GO:0006164">
    <property type="term" value="P:purine nucleotide biosynthetic process"/>
    <property type="evidence" value="ECO:0007669"/>
    <property type="project" value="UniProtKB-KW"/>
</dbReference>
<dbReference type="GO" id="GO:0035999">
    <property type="term" value="P:tetrahydrofolate interconversion"/>
    <property type="evidence" value="ECO:0007669"/>
    <property type="project" value="UniProtKB-UniRule"/>
</dbReference>
<dbReference type="CDD" id="cd01080">
    <property type="entry name" value="NAD_bind_m-THF_DH_Cyclohyd"/>
    <property type="match status" value="1"/>
</dbReference>
<dbReference type="FunFam" id="3.40.50.720:FF:000006">
    <property type="entry name" value="Bifunctional protein FolD"/>
    <property type="match status" value="1"/>
</dbReference>
<dbReference type="FunFam" id="3.40.50.10860:FF:000005">
    <property type="entry name" value="C-1-tetrahydrofolate synthase, cytoplasmic, putative"/>
    <property type="match status" value="1"/>
</dbReference>
<dbReference type="Gene3D" id="3.40.50.10860">
    <property type="entry name" value="Leucine Dehydrogenase, chain A, domain 1"/>
    <property type="match status" value="1"/>
</dbReference>
<dbReference type="Gene3D" id="3.40.50.720">
    <property type="entry name" value="NAD(P)-binding Rossmann-like Domain"/>
    <property type="match status" value="1"/>
</dbReference>
<dbReference type="HAMAP" id="MF_01576">
    <property type="entry name" value="THF_DHG_CYH"/>
    <property type="match status" value="1"/>
</dbReference>
<dbReference type="InterPro" id="IPR046346">
    <property type="entry name" value="Aminoacid_DH-like_N_sf"/>
</dbReference>
<dbReference type="InterPro" id="IPR036291">
    <property type="entry name" value="NAD(P)-bd_dom_sf"/>
</dbReference>
<dbReference type="InterPro" id="IPR000672">
    <property type="entry name" value="THF_DH/CycHdrlase"/>
</dbReference>
<dbReference type="InterPro" id="IPR020630">
    <property type="entry name" value="THF_DH/CycHdrlase_cat_dom"/>
</dbReference>
<dbReference type="InterPro" id="IPR020867">
    <property type="entry name" value="THF_DH/CycHdrlase_CS"/>
</dbReference>
<dbReference type="InterPro" id="IPR020631">
    <property type="entry name" value="THF_DH/CycHdrlase_NAD-bd_dom"/>
</dbReference>
<dbReference type="NCBIfam" id="NF010783">
    <property type="entry name" value="PRK14186.1"/>
    <property type="match status" value="1"/>
</dbReference>
<dbReference type="NCBIfam" id="NF010785">
    <property type="entry name" value="PRK14188.1"/>
    <property type="match status" value="1"/>
</dbReference>
<dbReference type="PANTHER" id="PTHR48099:SF5">
    <property type="entry name" value="C-1-TETRAHYDROFOLATE SYNTHASE, CYTOPLASMIC"/>
    <property type="match status" value="1"/>
</dbReference>
<dbReference type="PANTHER" id="PTHR48099">
    <property type="entry name" value="C-1-TETRAHYDROFOLATE SYNTHASE, CYTOPLASMIC-RELATED"/>
    <property type="match status" value="1"/>
</dbReference>
<dbReference type="Pfam" id="PF00763">
    <property type="entry name" value="THF_DHG_CYH"/>
    <property type="match status" value="1"/>
</dbReference>
<dbReference type="Pfam" id="PF02882">
    <property type="entry name" value="THF_DHG_CYH_C"/>
    <property type="match status" value="1"/>
</dbReference>
<dbReference type="PRINTS" id="PR00085">
    <property type="entry name" value="THFDHDRGNASE"/>
</dbReference>
<dbReference type="SUPFAM" id="SSF53223">
    <property type="entry name" value="Aminoacid dehydrogenase-like, N-terminal domain"/>
    <property type="match status" value="1"/>
</dbReference>
<dbReference type="SUPFAM" id="SSF51735">
    <property type="entry name" value="NAD(P)-binding Rossmann-fold domains"/>
    <property type="match status" value="1"/>
</dbReference>
<dbReference type="PROSITE" id="PS00766">
    <property type="entry name" value="THF_DHG_CYH_1"/>
    <property type="match status" value="1"/>
</dbReference>
<organism>
    <name type="scientific">Rhodopseudomonas palustris (strain BisB18)</name>
    <dbReference type="NCBI Taxonomy" id="316056"/>
    <lineage>
        <taxon>Bacteria</taxon>
        <taxon>Pseudomonadati</taxon>
        <taxon>Pseudomonadota</taxon>
        <taxon>Alphaproteobacteria</taxon>
        <taxon>Hyphomicrobiales</taxon>
        <taxon>Nitrobacteraceae</taxon>
        <taxon>Rhodopseudomonas</taxon>
    </lineage>
</organism>
<feature type="chain" id="PRO_0000268475" description="Bifunctional protein FolD">
    <location>
        <begin position="1"/>
        <end position="295"/>
    </location>
</feature>
<feature type="binding site" evidence="1">
    <location>
        <begin position="166"/>
        <end position="168"/>
    </location>
    <ligand>
        <name>NADP(+)</name>
        <dbReference type="ChEBI" id="CHEBI:58349"/>
    </ligand>
</feature>
<feature type="binding site" evidence="1">
    <location>
        <position position="191"/>
    </location>
    <ligand>
        <name>NADP(+)</name>
        <dbReference type="ChEBI" id="CHEBI:58349"/>
    </ligand>
</feature>
<feature type="binding site" evidence="1">
    <location>
        <position position="232"/>
    </location>
    <ligand>
        <name>NADP(+)</name>
        <dbReference type="ChEBI" id="CHEBI:58349"/>
    </ligand>
</feature>
<protein>
    <recommendedName>
        <fullName evidence="1">Bifunctional protein FolD</fullName>
    </recommendedName>
    <domain>
        <recommendedName>
            <fullName evidence="1">Methylenetetrahydrofolate dehydrogenase</fullName>
            <ecNumber evidence="1">1.5.1.5</ecNumber>
        </recommendedName>
    </domain>
    <domain>
        <recommendedName>
            <fullName evidence="1">Methenyltetrahydrofolate cyclohydrolase</fullName>
            <ecNumber evidence="1">3.5.4.9</ecNumber>
        </recommendedName>
    </domain>
</protein>
<sequence>MTARIIDGKTISAELRGKLADEVARVVRDHGVTPGLAVVLVGSDPASEVYVRSKHKQTKEAGMASFEHKLPADVPQAELLALIGQLNADPAVHGILVQLPLPKGLDSNAVIAAVDPAKDVDGLNPVNAGRLASGLFALTPCTPLGCIVMAKQVHASLEGMNAIVIGRSNLVGKPLVQLLLNENATVTIAHSRSRDLPALCRQADLVFAAVGKPEMVRGNWIKPGATVIDVGINRTPSPDGGKDKLVGDVAFAEAKEVAGAITPVPGGVGLMTVACLLVNTLRAACAIHGLPKPAV</sequence>
<accession>Q21D98</accession>
<proteinExistence type="inferred from homology"/>
<gene>
    <name evidence="1" type="primary">folD</name>
    <name type="ordered locus">RPC_0059</name>
</gene>
<keyword id="KW-0028">Amino-acid biosynthesis</keyword>
<keyword id="KW-0368">Histidine biosynthesis</keyword>
<keyword id="KW-0378">Hydrolase</keyword>
<keyword id="KW-0486">Methionine biosynthesis</keyword>
<keyword id="KW-0511">Multifunctional enzyme</keyword>
<keyword id="KW-0521">NADP</keyword>
<keyword id="KW-0554">One-carbon metabolism</keyword>
<keyword id="KW-0560">Oxidoreductase</keyword>
<keyword id="KW-0658">Purine biosynthesis</keyword>
<name>FOLD_RHOPB</name>
<evidence type="ECO:0000255" key="1">
    <source>
        <dbReference type="HAMAP-Rule" id="MF_01576"/>
    </source>
</evidence>
<comment type="function">
    <text evidence="1">Catalyzes the oxidation of 5,10-methylenetetrahydrofolate to 5,10-methenyltetrahydrofolate and then the hydrolysis of 5,10-methenyltetrahydrofolate to 10-formyltetrahydrofolate.</text>
</comment>
<comment type="catalytic activity">
    <reaction evidence="1">
        <text>(6R)-5,10-methylene-5,6,7,8-tetrahydrofolate + NADP(+) = (6R)-5,10-methenyltetrahydrofolate + NADPH</text>
        <dbReference type="Rhea" id="RHEA:22812"/>
        <dbReference type="ChEBI" id="CHEBI:15636"/>
        <dbReference type="ChEBI" id="CHEBI:57455"/>
        <dbReference type="ChEBI" id="CHEBI:57783"/>
        <dbReference type="ChEBI" id="CHEBI:58349"/>
        <dbReference type="EC" id="1.5.1.5"/>
    </reaction>
</comment>
<comment type="catalytic activity">
    <reaction evidence="1">
        <text>(6R)-5,10-methenyltetrahydrofolate + H2O = (6R)-10-formyltetrahydrofolate + H(+)</text>
        <dbReference type="Rhea" id="RHEA:23700"/>
        <dbReference type="ChEBI" id="CHEBI:15377"/>
        <dbReference type="ChEBI" id="CHEBI:15378"/>
        <dbReference type="ChEBI" id="CHEBI:57455"/>
        <dbReference type="ChEBI" id="CHEBI:195366"/>
        <dbReference type="EC" id="3.5.4.9"/>
    </reaction>
</comment>
<comment type="pathway">
    <text evidence="1">One-carbon metabolism; tetrahydrofolate interconversion.</text>
</comment>
<comment type="subunit">
    <text evidence="1">Homodimer.</text>
</comment>
<comment type="similarity">
    <text evidence="1">Belongs to the tetrahydrofolate dehydrogenase/cyclohydrolase family.</text>
</comment>
<reference key="1">
    <citation type="submission" date="2006-03" db="EMBL/GenBank/DDBJ databases">
        <title>Complete sequence of Rhodopseudomonas palustris BisB18.</title>
        <authorList>
            <consortium name="US DOE Joint Genome Institute"/>
            <person name="Copeland A."/>
            <person name="Lucas S."/>
            <person name="Lapidus A."/>
            <person name="Barry K."/>
            <person name="Detter J.C."/>
            <person name="Glavina del Rio T."/>
            <person name="Hammon N."/>
            <person name="Israni S."/>
            <person name="Dalin E."/>
            <person name="Tice H."/>
            <person name="Pitluck S."/>
            <person name="Chain P."/>
            <person name="Malfatti S."/>
            <person name="Shin M."/>
            <person name="Vergez L."/>
            <person name="Schmutz J."/>
            <person name="Larimer F."/>
            <person name="Land M."/>
            <person name="Hauser L."/>
            <person name="Pelletier D.A."/>
            <person name="Kyrpides N."/>
            <person name="Anderson I."/>
            <person name="Oda Y."/>
            <person name="Harwood C.S."/>
            <person name="Richardson P."/>
        </authorList>
    </citation>
    <scope>NUCLEOTIDE SEQUENCE [LARGE SCALE GENOMIC DNA]</scope>
    <source>
        <strain>BisB18</strain>
    </source>
</reference>